<organism>
    <name type="scientific">Antechinus swainsonii</name>
    <name type="common">Dusky antechinus</name>
    <dbReference type="NCBI Taxonomy" id="9284"/>
    <lineage>
        <taxon>Eukaryota</taxon>
        <taxon>Metazoa</taxon>
        <taxon>Chordata</taxon>
        <taxon>Craniata</taxon>
        <taxon>Vertebrata</taxon>
        <taxon>Euteleostomi</taxon>
        <taxon>Mammalia</taxon>
        <taxon>Metatheria</taxon>
        <taxon>Dasyuromorphia</taxon>
        <taxon>Dasyuridae</taxon>
        <taxon>Antechinus</taxon>
    </lineage>
</organism>
<dbReference type="EMBL" id="M99453">
    <property type="protein sequence ID" value="AAB95426.1"/>
    <property type="molecule type" value="Genomic_DNA"/>
</dbReference>
<dbReference type="SMR" id="Q33865"/>
<dbReference type="GO" id="GO:0005743">
    <property type="term" value="C:mitochondrial inner membrane"/>
    <property type="evidence" value="ECO:0007669"/>
    <property type="project" value="UniProtKB-SubCell"/>
</dbReference>
<dbReference type="GO" id="GO:0045275">
    <property type="term" value="C:respiratory chain complex III"/>
    <property type="evidence" value="ECO:0007669"/>
    <property type="project" value="InterPro"/>
</dbReference>
<dbReference type="GO" id="GO:0046872">
    <property type="term" value="F:metal ion binding"/>
    <property type="evidence" value="ECO:0007669"/>
    <property type="project" value="UniProtKB-KW"/>
</dbReference>
<dbReference type="GO" id="GO:0008121">
    <property type="term" value="F:ubiquinol-cytochrome-c reductase activity"/>
    <property type="evidence" value="ECO:0007669"/>
    <property type="project" value="InterPro"/>
</dbReference>
<dbReference type="GO" id="GO:0006122">
    <property type="term" value="P:mitochondrial electron transport, ubiquinol to cytochrome c"/>
    <property type="evidence" value="ECO:0007669"/>
    <property type="project" value="TreeGrafter"/>
</dbReference>
<dbReference type="CDD" id="cd00290">
    <property type="entry name" value="cytochrome_b_C"/>
    <property type="match status" value="1"/>
</dbReference>
<dbReference type="CDD" id="cd00284">
    <property type="entry name" value="Cytochrome_b_N"/>
    <property type="match status" value="1"/>
</dbReference>
<dbReference type="FunFam" id="1.20.810.10:FF:000002">
    <property type="entry name" value="Cytochrome b"/>
    <property type="match status" value="1"/>
</dbReference>
<dbReference type="Gene3D" id="1.20.810.10">
    <property type="entry name" value="Cytochrome Bc1 Complex, Chain C"/>
    <property type="match status" value="1"/>
</dbReference>
<dbReference type="InterPro" id="IPR005798">
    <property type="entry name" value="Cyt_b/b6_C"/>
</dbReference>
<dbReference type="InterPro" id="IPR036150">
    <property type="entry name" value="Cyt_b/b6_C_sf"/>
</dbReference>
<dbReference type="InterPro" id="IPR005797">
    <property type="entry name" value="Cyt_b/b6_N"/>
</dbReference>
<dbReference type="InterPro" id="IPR027387">
    <property type="entry name" value="Cytb/b6-like_sf"/>
</dbReference>
<dbReference type="InterPro" id="IPR030689">
    <property type="entry name" value="Cytochrome_b"/>
</dbReference>
<dbReference type="InterPro" id="IPR048260">
    <property type="entry name" value="Cytochrome_b_C_euk/bac"/>
</dbReference>
<dbReference type="InterPro" id="IPR048259">
    <property type="entry name" value="Cytochrome_b_N_euk/bac"/>
</dbReference>
<dbReference type="InterPro" id="IPR016174">
    <property type="entry name" value="Di-haem_cyt_TM"/>
</dbReference>
<dbReference type="PANTHER" id="PTHR19271">
    <property type="entry name" value="CYTOCHROME B"/>
    <property type="match status" value="1"/>
</dbReference>
<dbReference type="PANTHER" id="PTHR19271:SF16">
    <property type="entry name" value="CYTOCHROME B"/>
    <property type="match status" value="1"/>
</dbReference>
<dbReference type="Pfam" id="PF00032">
    <property type="entry name" value="Cytochrom_B_C"/>
    <property type="match status" value="1"/>
</dbReference>
<dbReference type="Pfam" id="PF00033">
    <property type="entry name" value="Cytochrome_B"/>
    <property type="match status" value="1"/>
</dbReference>
<dbReference type="PIRSF" id="PIRSF038885">
    <property type="entry name" value="COB"/>
    <property type="match status" value="1"/>
</dbReference>
<dbReference type="SUPFAM" id="SSF81648">
    <property type="entry name" value="a domain/subunit of cytochrome bc1 complex (Ubiquinol-cytochrome c reductase)"/>
    <property type="match status" value="1"/>
</dbReference>
<dbReference type="SUPFAM" id="SSF81342">
    <property type="entry name" value="Transmembrane di-heme cytochromes"/>
    <property type="match status" value="1"/>
</dbReference>
<dbReference type="PROSITE" id="PS51003">
    <property type="entry name" value="CYTB_CTER"/>
    <property type="match status" value="1"/>
</dbReference>
<dbReference type="PROSITE" id="PS51002">
    <property type="entry name" value="CYTB_NTER"/>
    <property type="match status" value="1"/>
</dbReference>
<keyword id="KW-0249">Electron transport</keyword>
<keyword id="KW-0349">Heme</keyword>
<keyword id="KW-0408">Iron</keyword>
<keyword id="KW-0472">Membrane</keyword>
<keyword id="KW-0479">Metal-binding</keyword>
<keyword id="KW-0496">Mitochondrion</keyword>
<keyword id="KW-0999">Mitochondrion inner membrane</keyword>
<keyword id="KW-0679">Respiratory chain</keyword>
<keyword id="KW-0812">Transmembrane</keyword>
<keyword id="KW-1133">Transmembrane helix</keyword>
<keyword id="KW-0813">Transport</keyword>
<keyword id="KW-0830">Ubiquinone</keyword>
<feature type="chain" id="PRO_0000060601" description="Cytochrome b">
    <location>
        <begin position="1"/>
        <end position="381"/>
    </location>
</feature>
<feature type="transmembrane region" description="Helical" evidence="2">
    <location>
        <begin position="33"/>
        <end position="53"/>
    </location>
</feature>
<feature type="transmembrane region" description="Helical" evidence="2">
    <location>
        <begin position="77"/>
        <end position="98"/>
    </location>
</feature>
<feature type="transmembrane region" description="Helical" evidence="2">
    <location>
        <begin position="113"/>
        <end position="133"/>
    </location>
</feature>
<feature type="transmembrane region" description="Helical" evidence="2">
    <location>
        <begin position="178"/>
        <end position="198"/>
    </location>
</feature>
<feature type="transmembrane region" description="Helical" evidence="2">
    <location>
        <begin position="226"/>
        <end position="246"/>
    </location>
</feature>
<feature type="transmembrane region" description="Helical" evidence="2">
    <location>
        <begin position="288"/>
        <end position="308"/>
    </location>
</feature>
<feature type="transmembrane region" description="Helical" evidence="2">
    <location>
        <begin position="320"/>
        <end position="340"/>
    </location>
</feature>
<feature type="transmembrane region" description="Helical" evidence="2">
    <location>
        <begin position="347"/>
        <end position="367"/>
    </location>
</feature>
<feature type="binding site" description="axial binding residue" evidence="2">
    <location>
        <position position="83"/>
    </location>
    <ligand>
        <name>heme b</name>
        <dbReference type="ChEBI" id="CHEBI:60344"/>
        <label>b562</label>
    </ligand>
    <ligandPart>
        <name>Fe</name>
        <dbReference type="ChEBI" id="CHEBI:18248"/>
    </ligandPart>
</feature>
<feature type="binding site" description="axial binding residue" evidence="2">
    <location>
        <position position="97"/>
    </location>
    <ligand>
        <name>heme b</name>
        <dbReference type="ChEBI" id="CHEBI:60344"/>
        <label>b566</label>
    </ligand>
    <ligandPart>
        <name>Fe</name>
        <dbReference type="ChEBI" id="CHEBI:18248"/>
    </ligandPart>
</feature>
<feature type="binding site" description="axial binding residue" evidence="2">
    <location>
        <position position="182"/>
    </location>
    <ligand>
        <name>heme b</name>
        <dbReference type="ChEBI" id="CHEBI:60344"/>
        <label>b562</label>
    </ligand>
    <ligandPart>
        <name>Fe</name>
        <dbReference type="ChEBI" id="CHEBI:18248"/>
    </ligandPart>
</feature>
<feature type="binding site" description="axial binding residue" evidence="2">
    <location>
        <position position="196"/>
    </location>
    <ligand>
        <name>heme b</name>
        <dbReference type="ChEBI" id="CHEBI:60344"/>
        <label>b566</label>
    </ligand>
    <ligandPart>
        <name>Fe</name>
        <dbReference type="ChEBI" id="CHEBI:18248"/>
    </ligandPart>
</feature>
<feature type="binding site" evidence="2">
    <location>
        <position position="201"/>
    </location>
    <ligand>
        <name>a ubiquinone</name>
        <dbReference type="ChEBI" id="CHEBI:16389"/>
    </ligand>
</feature>
<proteinExistence type="inferred from homology"/>
<name>CYB_ANTSW</name>
<sequence>MTNLRKTHPLMKIINHSFIDLPAPSNISAWWNFGSLLGVCLIIQILTGFFLAMHYTSDMLTAFSSVAHICQDVNYGWLVRNLHANGASMFFMCLFLHVGWGIYYGSYLYKETWNIGVILLLTEMATAFVGYVLPWGQMAFWGATVITNLLSAIPYIGTTLAEWIWSGFAVDKATLTQFFTLHFILSFIVMALAIVHLLFLHETGSNNPSGINPDSDKIPFHPYYTIKDTLGLLFLFLTLLLLALFSPDSLGDPDNFSPANPLNTPPHIKPEWYFLFAYAILRSIPNKLGGVLALLASILVLLIIPFLHTANQRSMMFRPISQTLFWILTANLITLTWIGGQPVEQPFIIIGQVASMSYFLLILVLMPLAGLFENYMLKPKW</sequence>
<evidence type="ECO:0000250" key="1"/>
<evidence type="ECO:0000250" key="2">
    <source>
        <dbReference type="UniProtKB" id="P00157"/>
    </source>
</evidence>
<evidence type="ECO:0000255" key="3">
    <source>
        <dbReference type="PROSITE-ProRule" id="PRU00967"/>
    </source>
</evidence>
<evidence type="ECO:0000255" key="4">
    <source>
        <dbReference type="PROSITE-ProRule" id="PRU00968"/>
    </source>
</evidence>
<comment type="function">
    <text evidence="2">Component of the ubiquinol-cytochrome c reductase complex (complex III or cytochrome b-c1 complex) that is part of the mitochondrial respiratory chain. The b-c1 complex mediates electron transfer from ubiquinol to cytochrome c. Contributes to the generation of a proton gradient across the mitochondrial membrane that is then used for ATP synthesis.</text>
</comment>
<comment type="cofactor">
    <cofactor evidence="2">
        <name>heme b</name>
        <dbReference type="ChEBI" id="CHEBI:60344"/>
    </cofactor>
    <text evidence="2">Binds 2 heme b groups non-covalently.</text>
</comment>
<comment type="subunit">
    <text evidence="2">The cytochrome bc1 complex contains 11 subunits: 3 respiratory subunits (MT-CYB, CYC1 and UQCRFS1), 2 core proteins (UQCRC1 and UQCRC2) and 6 low-molecular weight proteins (UQCRH/QCR6, UQCRB/QCR7, UQCRQ/QCR8, UQCR10/QCR9, UQCR11/QCR10 and a cleavage product of UQCRFS1). This cytochrome bc1 complex then forms a dimer.</text>
</comment>
<comment type="subcellular location">
    <subcellularLocation>
        <location evidence="2">Mitochondrion inner membrane</location>
        <topology evidence="2">Multi-pass membrane protein</topology>
    </subcellularLocation>
</comment>
<comment type="miscellaneous">
    <text evidence="1">Heme 1 (or BL or b562) is low-potential and absorbs at about 562 nm, and heme 2 (or BH or b566) is high-potential and absorbs at about 566 nm.</text>
</comment>
<comment type="similarity">
    <text evidence="3 4">Belongs to the cytochrome b family.</text>
</comment>
<comment type="caution">
    <text evidence="2">The full-length protein contains only eight transmembrane helices, not nine as predicted by bioinformatics tools.</text>
</comment>
<protein>
    <recommendedName>
        <fullName>Cytochrome b</fullName>
    </recommendedName>
    <alternativeName>
        <fullName>Complex III subunit 3</fullName>
    </alternativeName>
    <alternativeName>
        <fullName>Complex III subunit III</fullName>
    </alternativeName>
    <alternativeName>
        <fullName>Cytochrome b-c1 complex subunit 3</fullName>
    </alternativeName>
    <alternativeName>
        <fullName>Ubiquinol-cytochrome-c reductase complex cytochrome b subunit</fullName>
    </alternativeName>
</protein>
<reference key="1">
    <citation type="journal article" date="1992" name="Proc. R. Soc. B">
        <title>Phylogenetic relationships of the thylacine (Mammalia: Thylacinidae) among dasyuroid marsupials: evidence from cytochrome b DNA sequences.</title>
        <authorList>
            <person name="Krajewski C."/>
            <person name="Driskell A.C."/>
            <person name="Baverstock P.R."/>
            <person name="Braun M.J."/>
        </authorList>
    </citation>
    <scope>NUCLEOTIDE SEQUENCE [GENOMIC DNA]</scope>
</reference>
<gene>
    <name type="primary">MT-CYB</name>
    <name type="synonym">COB</name>
    <name type="synonym">CYTB</name>
    <name type="synonym">MTCYB</name>
</gene>
<geneLocation type="mitochondrion"/>
<accession>Q33865</accession>